<feature type="chain" id="PRO_1000004918" description="Peptide chain release factor 1">
    <location>
        <begin position="1"/>
        <end position="357"/>
    </location>
</feature>
<feature type="modified residue" description="N5-methylglutamine" evidence="1">
    <location>
        <position position="236"/>
    </location>
</feature>
<name>RF1_MYCUA</name>
<reference key="1">
    <citation type="journal article" date="2007" name="Genome Res.">
        <title>Reductive evolution and niche adaptation inferred from the genome of Mycobacterium ulcerans, the causative agent of Buruli ulcer.</title>
        <authorList>
            <person name="Stinear T.P."/>
            <person name="Seemann T."/>
            <person name="Pidot S."/>
            <person name="Frigui W."/>
            <person name="Reysset G."/>
            <person name="Garnier T."/>
            <person name="Meurice G."/>
            <person name="Simon D."/>
            <person name="Bouchier C."/>
            <person name="Ma L."/>
            <person name="Tichit M."/>
            <person name="Porter J.L."/>
            <person name="Ryan J."/>
            <person name="Johnson P.D.R."/>
            <person name="Davies J.K."/>
            <person name="Jenkin G.A."/>
            <person name="Small P.L.C."/>
            <person name="Jones L.M."/>
            <person name="Tekaia F."/>
            <person name="Laval F."/>
            <person name="Daffe M."/>
            <person name="Parkhill J."/>
            <person name="Cole S.T."/>
        </authorList>
    </citation>
    <scope>NUCLEOTIDE SEQUENCE [LARGE SCALE GENOMIC DNA]</scope>
    <source>
        <strain>Agy99</strain>
    </source>
</reference>
<gene>
    <name evidence="1" type="primary">prfA</name>
    <name type="ordered locus">MUL_3965</name>
</gene>
<evidence type="ECO:0000255" key="1">
    <source>
        <dbReference type="HAMAP-Rule" id="MF_00093"/>
    </source>
</evidence>
<protein>
    <recommendedName>
        <fullName evidence="1">Peptide chain release factor 1</fullName>
        <shortName evidence="1">RF-1</shortName>
    </recommendedName>
</protein>
<organism>
    <name type="scientific">Mycobacterium ulcerans (strain Agy99)</name>
    <dbReference type="NCBI Taxonomy" id="362242"/>
    <lineage>
        <taxon>Bacteria</taxon>
        <taxon>Bacillati</taxon>
        <taxon>Actinomycetota</taxon>
        <taxon>Actinomycetes</taxon>
        <taxon>Mycobacteriales</taxon>
        <taxon>Mycobacteriaceae</taxon>
        <taxon>Mycobacterium</taxon>
        <taxon>Mycobacterium ulcerans group</taxon>
    </lineage>
</organism>
<keyword id="KW-0963">Cytoplasm</keyword>
<keyword id="KW-0488">Methylation</keyword>
<keyword id="KW-0648">Protein biosynthesis</keyword>
<dbReference type="EMBL" id="CP000325">
    <property type="protein sequence ID" value="ABL06030.1"/>
    <property type="molecule type" value="Genomic_DNA"/>
</dbReference>
<dbReference type="RefSeq" id="WP_011741635.1">
    <property type="nucleotide sequence ID" value="NC_008611.1"/>
</dbReference>
<dbReference type="SMR" id="A0PUL1"/>
<dbReference type="KEGG" id="mul:MUL_3965"/>
<dbReference type="eggNOG" id="COG0216">
    <property type="taxonomic scope" value="Bacteria"/>
</dbReference>
<dbReference type="HOGENOM" id="CLU_036856_0_1_11"/>
<dbReference type="Proteomes" id="UP000000765">
    <property type="component" value="Chromosome"/>
</dbReference>
<dbReference type="GO" id="GO:0005737">
    <property type="term" value="C:cytoplasm"/>
    <property type="evidence" value="ECO:0007669"/>
    <property type="project" value="UniProtKB-SubCell"/>
</dbReference>
<dbReference type="GO" id="GO:0016149">
    <property type="term" value="F:translation release factor activity, codon specific"/>
    <property type="evidence" value="ECO:0007669"/>
    <property type="project" value="UniProtKB-UniRule"/>
</dbReference>
<dbReference type="FunFam" id="3.30.160.20:FF:000004">
    <property type="entry name" value="Peptide chain release factor 1"/>
    <property type="match status" value="1"/>
</dbReference>
<dbReference type="Gene3D" id="3.30.160.20">
    <property type="match status" value="1"/>
</dbReference>
<dbReference type="Gene3D" id="3.30.70.1660">
    <property type="match status" value="1"/>
</dbReference>
<dbReference type="Gene3D" id="6.10.140.1950">
    <property type="match status" value="1"/>
</dbReference>
<dbReference type="HAMAP" id="MF_00093">
    <property type="entry name" value="Rel_fac_1"/>
    <property type="match status" value="1"/>
</dbReference>
<dbReference type="InterPro" id="IPR005139">
    <property type="entry name" value="PCRF"/>
</dbReference>
<dbReference type="InterPro" id="IPR000352">
    <property type="entry name" value="Pep_chain_release_fac_I"/>
</dbReference>
<dbReference type="InterPro" id="IPR045853">
    <property type="entry name" value="Pep_chain_release_fac_I_sf"/>
</dbReference>
<dbReference type="InterPro" id="IPR050057">
    <property type="entry name" value="Prokaryotic/Mito_RF"/>
</dbReference>
<dbReference type="InterPro" id="IPR004373">
    <property type="entry name" value="RF-1"/>
</dbReference>
<dbReference type="NCBIfam" id="TIGR00019">
    <property type="entry name" value="prfA"/>
    <property type="match status" value="1"/>
</dbReference>
<dbReference type="NCBIfam" id="NF001859">
    <property type="entry name" value="PRK00591.1"/>
    <property type="match status" value="1"/>
</dbReference>
<dbReference type="PANTHER" id="PTHR43804">
    <property type="entry name" value="LD18447P"/>
    <property type="match status" value="1"/>
</dbReference>
<dbReference type="PANTHER" id="PTHR43804:SF7">
    <property type="entry name" value="LD18447P"/>
    <property type="match status" value="1"/>
</dbReference>
<dbReference type="Pfam" id="PF03462">
    <property type="entry name" value="PCRF"/>
    <property type="match status" value="1"/>
</dbReference>
<dbReference type="Pfam" id="PF00472">
    <property type="entry name" value="RF-1"/>
    <property type="match status" value="1"/>
</dbReference>
<dbReference type="SMART" id="SM00937">
    <property type="entry name" value="PCRF"/>
    <property type="match status" value="1"/>
</dbReference>
<dbReference type="SUPFAM" id="SSF75620">
    <property type="entry name" value="Release factor"/>
    <property type="match status" value="1"/>
</dbReference>
<dbReference type="PROSITE" id="PS00745">
    <property type="entry name" value="RF_PROK_I"/>
    <property type="match status" value="1"/>
</dbReference>
<accession>A0PUL1</accession>
<comment type="function">
    <text evidence="1">Peptide chain release factor 1 directs the termination of translation in response to the peptide chain termination codons UAG and UAA.</text>
</comment>
<comment type="subcellular location">
    <subcellularLocation>
        <location evidence="1">Cytoplasm</location>
    </subcellularLocation>
</comment>
<comment type="PTM">
    <text evidence="1">Methylated by PrmC. Methylation increases the termination efficiency of RF1.</text>
</comment>
<comment type="similarity">
    <text evidence="1">Belongs to the prokaryotic/mitochondrial release factor family.</text>
</comment>
<proteinExistence type="inferred from homology"/>
<sequence>MAAPVQTIDVLLAEHADLERALADPELHSRPDEARKAGRRFARLARIVATYRKLVAAREDLETAHELAATDESFVAEAAELEARVAELDSQLTDMLAPRDPHDADDIVLEVKSGEGGEESALFAADLARMYIRYAERHGWTVTVLGETTSDLGGYRDATLAIASKGDTADGVWSRMKFEGGVHRVQRVPVTESQGRVHTSAAGVLVYPEPEEVGEVQIDESDLRIDVYRSSGKGGQGVNTTDSAVRITHLPTGIVVTCQNERSQLQNKIRAMQVLGARLQAIAEERAMADASADRASQIRTVDRSERIRTYNFPENRVTDHRIGYKSHNLDQVLDGDLDALFDALAAADKQARLQQS</sequence>